<gene>
    <name evidence="1" type="primary">dtd</name>
    <name type="ordered locus">llmg_0115</name>
</gene>
<dbReference type="EC" id="3.1.1.96" evidence="1"/>
<dbReference type="EMBL" id="AM406671">
    <property type="protein sequence ID" value="CAL96722.1"/>
    <property type="molecule type" value="Genomic_DNA"/>
</dbReference>
<dbReference type="RefSeq" id="WP_011834213.1">
    <property type="nucleotide sequence ID" value="NC_009004.1"/>
</dbReference>
<dbReference type="SMR" id="A2RHI6"/>
<dbReference type="STRING" id="416870.llmg_0115"/>
<dbReference type="GeneID" id="61108415"/>
<dbReference type="KEGG" id="llm:llmg_0115"/>
<dbReference type="eggNOG" id="COG1490">
    <property type="taxonomic scope" value="Bacteria"/>
</dbReference>
<dbReference type="HOGENOM" id="CLU_076901_1_0_9"/>
<dbReference type="OrthoDB" id="9801395at2"/>
<dbReference type="PhylomeDB" id="A2RHI6"/>
<dbReference type="Proteomes" id="UP000000364">
    <property type="component" value="Chromosome"/>
</dbReference>
<dbReference type="GO" id="GO:0005737">
    <property type="term" value="C:cytoplasm"/>
    <property type="evidence" value="ECO:0007669"/>
    <property type="project" value="UniProtKB-SubCell"/>
</dbReference>
<dbReference type="GO" id="GO:0051500">
    <property type="term" value="F:D-tyrosyl-tRNA(Tyr) deacylase activity"/>
    <property type="evidence" value="ECO:0007669"/>
    <property type="project" value="TreeGrafter"/>
</dbReference>
<dbReference type="GO" id="GO:0106026">
    <property type="term" value="F:Gly-tRNA(Ala) deacylase activity"/>
    <property type="evidence" value="ECO:0007669"/>
    <property type="project" value="UniProtKB-UniRule"/>
</dbReference>
<dbReference type="GO" id="GO:0043908">
    <property type="term" value="F:Ser(Gly)-tRNA(Ala) hydrolase activity"/>
    <property type="evidence" value="ECO:0007669"/>
    <property type="project" value="UniProtKB-UniRule"/>
</dbReference>
<dbReference type="GO" id="GO:0000049">
    <property type="term" value="F:tRNA binding"/>
    <property type="evidence" value="ECO:0007669"/>
    <property type="project" value="UniProtKB-UniRule"/>
</dbReference>
<dbReference type="GO" id="GO:0019478">
    <property type="term" value="P:D-amino acid catabolic process"/>
    <property type="evidence" value="ECO:0007669"/>
    <property type="project" value="UniProtKB-UniRule"/>
</dbReference>
<dbReference type="CDD" id="cd00563">
    <property type="entry name" value="Dtyr_deacylase"/>
    <property type="match status" value="1"/>
</dbReference>
<dbReference type="FunFam" id="3.50.80.10:FF:000001">
    <property type="entry name" value="D-aminoacyl-tRNA deacylase"/>
    <property type="match status" value="1"/>
</dbReference>
<dbReference type="Gene3D" id="3.50.80.10">
    <property type="entry name" value="D-tyrosyl-tRNA(Tyr) deacylase"/>
    <property type="match status" value="1"/>
</dbReference>
<dbReference type="HAMAP" id="MF_00518">
    <property type="entry name" value="Deacylase_Dtd"/>
    <property type="match status" value="1"/>
</dbReference>
<dbReference type="InterPro" id="IPR003732">
    <property type="entry name" value="Daa-tRNA_deacyls_DTD"/>
</dbReference>
<dbReference type="InterPro" id="IPR023509">
    <property type="entry name" value="DTD-like_sf"/>
</dbReference>
<dbReference type="NCBIfam" id="TIGR00256">
    <property type="entry name" value="D-aminoacyl-tRNA deacylase"/>
    <property type="match status" value="1"/>
</dbReference>
<dbReference type="PANTHER" id="PTHR10472:SF5">
    <property type="entry name" value="D-AMINOACYL-TRNA DEACYLASE 1"/>
    <property type="match status" value="1"/>
</dbReference>
<dbReference type="PANTHER" id="PTHR10472">
    <property type="entry name" value="D-TYROSYL-TRNA TYR DEACYLASE"/>
    <property type="match status" value="1"/>
</dbReference>
<dbReference type="Pfam" id="PF02580">
    <property type="entry name" value="Tyr_Deacylase"/>
    <property type="match status" value="1"/>
</dbReference>
<dbReference type="SUPFAM" id="SSF69500">
    <property type="entry name" value="DTD-like"/>
    <property type="match status" value="1"/>
</dbReference>
<sequence>MKIVIQRVKSASVSIDGKIKEKINQGFLLLVGVEDADSNFDLDYAVRKIAQMRIFSDEADKMNLSVQDIQGEILSISQFTLYAETKKGNRPSFSAAGKPDFAKAMYEKFNDSLAQIVPVKAGVFGADMQVELINDGPVTIILDTKEARKNA</sequence>
<reference key="1">
    <citation type="journal article" date="2007" name="J. Bacteriol.">
        <title>The complete genome sequence of the lactic acid bacterial paradigm Lactococcus lactis subsp. cremoris MG1363.</title>
        <authorList>
            <person name="Wegmann U."/>
            <person name="O'Connell-Motherway M."/>
            <person name="Zomer A."/>
            <person name="Buist G."/>
            <person name="Shearman C."/>
            <person name="Canchaya C."/>
            <person name="Ventura M."/>
            <person name="Goesmann A."/>
            <person name="Gasson M.J."/>
            <person name="Kuipers O.P."/>
            <person name="van Sinderen D."/>
            <person name="Kok J."/>
        </authorList>
    </citation>
    <scope>NUCLEOTIDE SEQUENCE [LARGE SCALE GENOMIC DNA]</scope>
    <source>
        <strain>MG1363</strain>
    </source>
</reference>
<name>DTD_LACLM</name>
<keyword id="KW-0963">Cytoplasm</keyword>
<keyword id="KW-0378">Hydrolase</keyword>
<keyword id="KW-0694">RNA-binding</keyword>
<keyword id="KW-0820">tRNA-binding</keyword>
<proteinExistence type="inferred from homology"/>
<feature type="chain" id="PRO_1000050846" description="D-aminoacyl-tRNA deacylase">
    <location>
        <begin position="1"/>
        <end position="151"/>
    </location>
</feature>
<feature type="short sequence motif" description="Gly-cisPro motif, important for rejection of L-amino acids" evidence="1">
    <location>
        <begin position="136"/>
        <end position="137"/>
    </location>
</feature>
<accession>A2RHI6</accession>
<protein>
    <recommendedName>
        <fullName evidence="1">D-aminoacyl-tRNA deacylase</fullName>
        <shortName evidence="1">DTD</shortName>
        <ecNumber evidence="1">3.1.1.96</ecNumber>
    </recommendedName>
    <alternativeName>
        <fullName evidence="1">Gly-tRNA(Ala) deacylase</fullName>
    </alternativeName>
</protein>
<organism>
    <name type="scientific">Lactococcus lactis subsp. cremoris (strain MG1363)</name>
    <dbReference type="NCBI Taxonomy" id="416870"/>
    <lineage>
        <taxon>Bacteria</taxon>
        <taxon>Bacillati</taxon>
        <taxon>Bacillota</taxon>
        <taxon>Bacilli</taxon>
        <taxon>Lactobacillales</taxon>
        <taxon>Streptococcaceae</taxon>
        <taxon>Lactococcus</taxon>
        <taxon>Lactococcus cremoris subsp. cremoris</taxon>
    </lineage>
</organism>
<evidence type="ECO:0000255" key="1">
    <source>
        <dbReference type="HAMAP-Rule" id="MF_00518"/>
    </source>
</evidence>
<comment type="function">
    <text evidence="1">An aminoacyl-tRNA editing enzyme that deacylates mischarged D-aminoacyl-tRNAs. Also deacylates mischarged glycyl-tRNA(Ala), protecting cells against glycine mischarging by AlaRS. Acts via tRNA-based rather than protein-based catalysis; rejects L-amino acids rather than detecting D-amino acids in the active site. By recycling D-aminoacyl-tRNA to D-amino acids and free tRNA molecules, this enzyme counteracts the toxicity associated with the formation of D-aminoacyl-tRNA entities in vivo and helps enforce protein L-homochirality.</text>
</comment>
<comment type="catalytic activity">
    <reaction evidence="1">
        <text>glycyl-tRNA(Ala) + H2O = tRNA(Ala) + glycine + H(+)</text>
        <dbReference type="Rhea" id="RHEA:53744"/>
        <dbReference type="Rhea" id="RHEA-COMP:9657"/>
        <dbReference type="Rhea" id="RHEA-COMP:13640"/>
        <dbReference type="ChEBI" id="CHEBI:15377"/>
        <dbReference type="ChEBI" id="CHEBI:15378"/>
        <dbReference type="ChEBI" id="CHEBI:57305"/>
        <dbReference type="ChEBI" id="CHEBI:78442"/>
        <dbReference type="ChEBI" id="CHEBI:78522"/>
        <dbReference type="EC" id="3.1.1.96"/>
    </reaction>
</comment>
<comment type="catalytic activity">
    <reaction evidence="1">
        <text>a D-aminoacyl-tRNA + H2O = a tRNA + a D-alpha-amino acid + H(+)</text>
        <dbReference type="Rhea" id="RHEA:13953"/>
        <dbReference type="Rhea" id="RHEA-COMP:10123"/>
        <dbReference type="Rhea" id="RHEA-COMP:10124"/>
        <dbReference type="ChEBI" id="CHEBI:15377"/>
        <dbReference type="ChEBI" id="CHEBI:15378"/>
        <dbReference type="ChEBI" id="CHEBI:59871"/>
        <dbReference type="ChEBI" id="CHEBI:78442"/>
        <dbReference type="ChEBI" id="CHEBI:79333"/>
        <dbReference type="EC" id="3.1.1.96"/>
    </reaction>
</comment>
<comment type="subunit">
    <text evidence="1">Homodimer.</text>
</comment>
<comment type="subcellular location">
    <subcellularLocation>
        <location evidence="1">Cytoplasm</location>
    </subcellularLocation>
</comment>
<comment type="domain">
    <text evidence="1">A Gly-cisPro motif from one monomer fits into the active site of the other monomer to allow specific chiral rejection of L-amino acids.</text>
</comment>
<comment type="similarity">
    <text evidence="1">Belongs to the DTD family.</text>
</comment>